<sequence length="331" mass="36404">MARMYYDADAQLELLKDKTIAIIGYGSQGHAHALNLRDSGLNVVVGLYAGSRSAERARAEGLAVHPVAEAAKMADWIMILLPDEVQRVVYEQEIAPHLQPGNVLSFAHGFNIHFGQIVPPAHVDVVMVAPKGPGHLVRRTYAQGEGVPCLFAVYQDASGQARDLAMAYAKGIGGTRAGILETTFREETETDLFGEQVVLCGGLSALIKAGFETLVQAGYQPELAYFECLHEVKLIVDLIVEGGLAKMRDSISNTAEYGDLTRGPRIITEETRAEMRKILHEIQTGQFAREFVLENMAGKPGFTAMRRREAEHPIEQVGQELRSMFSWLKRA</sequence>
<organism>
    <name type="scientific">Thermosynechococcus vestitus (strain NIES-2133 / IAM M-273 / BP-1)</name>
    <dbReference type="NCBI Taxonomy" id="197221"/>
    <lineage>
        <taxon>Bacteria</taxon>
        <taxon>Bacillati</taxon>
        <taxon>Cyanobacteriota</taxon>
        <taxon>Cyanophyceae</taxon>
        <taxon>Acaryochloridales</taxon>
        <taxon>Thermosynechococcaceae</taxon>
        <taxon>Thermosynechococcus</taxon>
    </lineage>
</organism>
<proteinExistence type="inferred from homology"/>
<gene>
    <name evidence="1" type="primary">ilvC</name>
    <name type="ordered locus">tll2254</name>
</gene>
<protein>
    <recommendedName>
        <fullName evidence="1">Ketol-acid reductoisomerase (NADP(+))</fullName>
        <shortName evidence="1">KARI</shortName>
        <ecNumber evidence="1">1.1.1.86</ecNumber>
    </recommendedName>
    <alternativeName>
        <fullName evidence="1">Acetohydroxy-acid isomeroreductase</fullName>
        <shortName evidence="1">AHIR</shortName>
    </alternativeName>
    <alternativeName>
        <fullName evidence="1">Alpha-keto-beta-hydroxylacyl reductoisomerase</fullName>
    </alternativeName>
    <alternativeName>
        <fullName evidence="1">Ketol-acid reductoisomerase type 1</fullName>
    </alternativeName>
    <alternativeName>
        <fullName evidence="1">Ketol-acid reductoisomerase type I</fullName>
    </alternativeName>
</protein>
<comment type="function">
    <text evidence="1">Involved in the biosynthesis of branched-chain amino acids (BCAA). Catalyzes an alkyl-migration followed by a ketol-acid reduction of (S)-2-acetolactate (S2AL) to yield (R)-2,3-dihydroxy-isovalerate. In the isomerase reaction, S2AL is rearranged via a Mg-dependent methyl migration to produce 3-hydroxy-3-methyl-2-ketobutyrate (HMKB). In the reductase reaction, this 2-ketoacid undergoes a metal-dependent reduction by NADPH to yield (R)-2,3-dihydroxy-isovalerate.</text>
</comment>
<comment type="catalytic activity">
    <reaction evidence="1">
        <text>(2R)-2,3-dihydroxy-3-methylbutanoate + NADP(+) = (2S)-2-acetolactate + NADPH + H(+)</text>
        <dbReference type="Rhea" id="RHEA:22068"/>
        <dbReference type="ChEBI" id="CHEBI:15378"/>
        <dbReference type="ChEBI" id="CHEBI:49072"/>
        <dbReference type="ChEBI" id="CHEBI:57783"/>
        <dbReference type="ChEBI" id="CHEBI:58349"/>
        <dbReference type="ChEBI" id="CHEBI:58476"/>
        <dbReference type="EC" id="1.1.1.86"/>
    </reaction>
</comment>
<comment type="catalytic activity">
    <reaction evidence="1">
        <text>(2R,3R)-2,3-dihydroxy-3-methylpentanoate + NADP(+) = (S)-2-ethyl-2-hydroxy-3-oxobutanoate + NADPH + H(+)</text>
        <dbReference type="Rhea" id="RHEA:13493"/>
        <dbReference type="ChEBI" id="CHEBI:15378"/>
        <dbReference type="ChEBI" id="CHEBI:49256"/>
        <dbReference type="ChEBI" id="CHEBI:49258"/>
        <dbReference type="ChEBI" id="CHEBI:57783"/>
        <dbReference type="ChEBI" id="CHEBI:58349"/>
        <dbReference type="EC" id="1.1.1.86"/>
    </reaction>
</comment>
<comment type="cofactor">
    <cofactor evidence="1">
        <name>Mg(2+)</name>
        <dbReference type="ChEBI" id="CHEBI:18420"/>
    </cofactor>
    <text evidence="1">Binds 2 magnesium ions per subunit.</text>
</comment>
<comment type="pathway">
    <text evidence="1">Amino-acid biosynthesis; L-isoleucine biosynthesis; L-isoleucine from 2-oxobutanoate: step 2/4.</text>
</comment>
<comment type="pathway">
    <text evidence="1">Amino-acid biosynthesis; L-valine biosynthesis; L-valine from pyruvate: step 2/4.</text>
</comment>
<comment type="similarity">
    <text evidence="1">Belongs to the ketol-acid reductoisomerase family.</text>
</comment>
<comment type="sequence caution" evidence="4">
    <conflict type="erroneous initiation">
        <sequence resource="EMBL-CDS" id="BAC09806"/>
    </conflict>
</comment>
<evidence type="ECO:0000255" key="1">
    <source>
        <dbReference type="HAMAP-Rule" id="MF_00435"/>
    </source>
</evidence>
<evidence type="ECO:0000255" key="2">
    <source>
        <dbReference type="PROSITE-ProRule" id="PRU01197"/>
    </source>
</evidence>
<evidence type="ECO:0000255" key="3">
    <source>
        <dbReference type="PROSITE-ProRule" id="PRU01198"/>
    </source>
</evidence>
<evidence type="ECO:0000305" key="4"/>
<name>ILVC_THEVB</name>
<keyword id="KW-0028">Amino-acid biosynthesis</keyword>
<keyword id="KW-0100">Branched-chain amino acid biosynthesis</keyword>
<keyword id="KW-0460">Magnesium</keyword>
<keyword id="KW-0479">Metal-binding</keyword>
<keyword id="KW-0521">NADP</keyword>
<keyword id="KW-0560">Oxidoreductase</keyword>
<keyword id="KW-1185">Reference proteome</keyword>
<feature type="chain" id="PRO_0000151370" description="Ketol-acid reductoisomerase (NADP(+))">
    <location>
        <begin position="1"/>
        <end position="331"/>
    </location>
</feature>
<feature type="domain" description="KARI N-terminal Rossmann" evidence="2">
    <location>
        <begin position="2"/>
        <end position="182"/>
    </location>
</feature>
<feature type="domain" description="KARI C-terminal knotted" evidence="3">
    <location>
        <begin position="183"/>
        <end position="328"/>
    </location>
</feature>
<feature type="active site" evidence="1">
    <location>
        <position position="108"/>
    </location>
</feature>
<feature type="binding site" evidence="1">
    <location>
        <begin position="25"/>
        <end position="28"/>
    </location>
    <ligand>
        <name>NADP(+)</name>
        <dbReference type="ChEBI" id="CHEBI:58349"/>
    </ligand>
</feature>
<feature type="binding site" evidence="1">
    <location>
        <position position="51"/>
    </location>
    <ligand>
        <name>NADP(+)</name>
        <dbReference type="ChEBI" id="CHEBI:58349"/>
    </ligand>
</feature>
<feature type="binding site" evidence="1">
    <location>
        <position position="53"/>
    </location>
    <ligand>
        <name>NADP(+)</name>
        <dbReference type="ChEBI" id="CHEBI:58349"/>
    </ligand>
</feature>
<feature type="binding site" evidence="1">
    <location>
        <begin position="83"/>
        <end position="86"/>
    </location>
    <ligand>
        <name>NADP(+)</name>
        <dbReference type="ChEBI" id="CHEBI:58349"/>
    </ligand>
</feature>
<feature type="binding site" evidence="1">
    <location>
        <position position="134"/>
    </location>
    <ligand>
        <name>NADP(+)</name>
        <dbReference type="ChEBI" id="CHEBI:58349"/>
    </ligand>
</feature>
<feature type="binding site" evidence="1">
    <location>
        <position position="191"/>
    </location>
    <ligand>
        <name>Mg(2+)</name>
        <dbReference type="ChEBI" id="CHEBI:18420"/>
        <label>1</label>
    </ligand>
</feature>
<feature type="binding site" evidence="1">
    <location>
        <position position="191"/>
    </location>
    <ligand>
        <name>Mg(2+)</name>
        <dbReference type="ChEBI" id="CHEBI:18420"/>
        <label>2</label>
    </ligand>
</feature>
<feature type="binding site" evidence="1">
    <location>
        <position position="195"/>
    </location>
    <ligand>
        <name>Mg(2+)</name>
        <dbReference type="ChEBI" id="CHEBI:18420"/>
        <label>1</label>
    </ligand>
</feature>
<feature type="binding site" evidence="1">
    <location>
        <position position="227"/>
    </location>
    <ligand>
        <name>Mg(2+)</name>
        <dbReference type="ChEBI" id="CHEBI:18420"/>
        <label>2</label>
    </ligand>
</feature>
<feature type="binding site" evidence="1">
    <location>
        <position position="231"/>
    </location>
    <ligand>
        <name>Mg(2+)</name>
        <dbReference type="ChEBI" id="CHEBI:18420"/>
        <label>2</label>
    </ligand>
</feature>
<feature type="binding site" evidence="1">
    <location>
        <position position="252"/>
    </location>
    <ligand>
        <name>substrate</name>
    </ligand>
</feature>
<reference key="1">
    <citation type="journal article" date="2002" name="DNA Res.">
        <title>Complete genome structure of the thermophilic cyanobacterium Thermosynechococcus elongatus BP-1.</title>
        <authorList>
            <person name="Nakamura Y."/>
            <person name="Kaneko T."/>
            <person name="Sato S."/>
            <person name="Ikeuchi M."/>
            <person name="Katoh H."/>
            <person name="Sasamoto S."/>
            <person name="Watanabe A."/>
            <person name="Iriguchi M."/>
            <person name="Kawashima K."/>
            <person name="Kimura T."/>
            <person name="Kishida Y."/>
            <person name="Kiyokawa C."/>
            <person name="Kohara M."/>
            <person name="Matsumoto M."/>
            <person name="Matsuno A."/>
            <person name="Nakazaki N."/>
            <person name="Shimpo S."/>
            <person name="Sugimoto M."/>
            <person name="Takeuchi C."/>
            <person name="Yamada M."/>
            <person name="Tabata S."/>
        </authorList>
    </citation>
    <scope>NUCLEOTIDE SEQUENCE [LARGE SCALE GENOMIC DNA]</scope>
    <source>
        <strain>NIES-2133 / IAM M-273 / BP-1</strain>
    </source>
</reference>
<accession>Q8DGR0</accession>
<dbReference type="EC" id="1.1.1.86" evidence="1"/>
<dbReference type="EMBL" id="BA000039">
    <property type="protein sequence ID" value="BAC09806.1"/>
    <property type="status" value="ALT_INIT"/>
    <property type="molecule type" value="Genomic_DNA"/>
</dbReference>
<dbReference type="RefSeq" id="NP_683044.1">
    <property type="nucleotide sequence ID" value="NC_004113.1"/>
</dbReference>
<dbReference type="RefSeq" id="WP_164921008.1">
    <property type="nucleotide sequence ID" value="NC_004113.1"/>
</dbReference>
<dbReference type="SMR" id="Q8DGR0"/>
<dbReference type="STRING" id="197221.gene:10748870"/>
<dbReference type="EnsemblBacteria" id="BAC09806">
    <property type="protein sequence ID" value="BAC09806"/>
    <property type="gene ID" value="BAC09806"/>
</dbReference>
<dbReference type="KEGG" id="tel:tll2254"/>
<dbReference type="PATRIC" id="fig|197221.4.peg.2363"/>
<dbReference type="eggNOG" id="COG0059">
    <property type="taxonomic scope" value="Bacteria"/>
</dbReference>
<dbReference type="UniPathway" id="UPA00047">
    <property type="reaction ID" value="UER00056"/>
</dbReference>
<dbReference type="UniPathway" id="UPA00049">
    <property type="reaction ID" value="UER00060"/>
</dbReference>
<dbReference type="Proteomes" id="UP000000440">
    <property type="component" value="Chromosome"/>
</dbReference>
<dbReference type="GO" id="GO:0005829">
    <property type="term" value="C:cytosol"/>
    <property type="evidence" value="ECO:0007669"/>
    <property type="project" value="TreeGrafter"/>
</dbReference>
<dbReference type="GO" id="GO:0004455">
    <property type="term" value="F:ketol-acid reductoisomerase activity"/>
    <property type="evidence" value="ECO:0007669"/>
    <property type="project" value="UniProtKB-UniRule"/>
</dbReference>
<dbReference type="GO" id="GO:0000287">
    <property type="term" value="F:magnesium ion binding"/>
    <property type="evidence" value="ECO:0007669"/>
    <property type="project" value="UniProtKB-UniRule"/>
</dbReference>
<dbReference type="GO" id="GO:0050661">
    <property type="term" value="F:NADP binding"/>
    <property type="evidence" value="ECO:0007669"/>
    <property type="project" value="InterPro"/>
</dbReference>
<dbReference type="GO" id="GO:0009097">
    <property type="term" value="P:isoleucine biosynthetic process"/>
    <property type="evidence" value="ECO:0007669"/>
    <property type="project" value="UniProtKB-UniRule"/>
</dbReference>
<dbReference type="GO" id="GO:0009099">
    <property type="term" value="P:L-valine biosynthetic process"/>
    <property type="evidence" value="ECO:0007669"/>
    <property type="project" value="UniProtKB-UniRule"/>
</dbReference>
<dbReference type="FunFam" id="3.40.50.720:FF:000023">
    <property type="entry name" value="Ketol-acid reductoisomerase (NADP(+))"/>
    <property type="match status" value="1"/>
</dbReference>
<dbReference type="Gene3D" id="6.10.240.10">
    <property type="match status" value="1"/>
</dbReference>
<dbReference type="Gene3D" id="3.40.50.720">
    <property type="entry name" value="NAD(P)-binding Rossmann-like Domain"/>
    <property type="match status" value="1"/>
</dbReference>
<dbReference type="HAMAP" id="MF_00435">
    <property type="entry name" value="IlvC"/>
    <property type="match status" value="1"/>
</dbReference>
<dbReference type="InterPro" id="IPR008927">
    <property type="entry name" value="6-PGluconate_DH-like_C_sf"/>
</dbReference>
<dbReference type="InterPro" id="IPR013023">
    <property type="entry name" value="KARI"/>
</dbReference>
<dbReference type="InterPro" id="IPR000506">
    <property type="entry name" value="KARI_C"/>
</dbReference>
<dbReference type="InterPro" id="IPR013116">
    <property type="entry name" value="KARI_N"/>
</dbReference>
<dbReference type="InterPro" id="IPR014359">
    <property type="entry name" value="KARI_prok"/>
</dbReference>
<dbReference type="InterPro" id="IPR036291">
    <property type="entry name" value="NAD(P)-bd_dom_sf"/>
</dbReference>
<dbReference type="NCBIfam" id="TIGR00465">
    <property type="entry name" value="ilvC"/>
    <property type="match status" value="1"/>
</dbReference>
<dbReference type="NCBIfam" id="NF004017">
    <property type="entry name" value="PRK05479.1"/>
    <property type="match status" value="1"/>
</dbReference>
<dbReference type="NCBIfam" id="NF009940">
    <property type="entry name" value="PRK13403.1"/>
    <property type="match status" value="1"/>
</dbReference>
<dbReference type="PANTHER" id="PTHR21371">
    <property type="entry name" value="KETOL-ACID REDUCTOISOMERASE, MITOCHONDRIAL"/>
    <property type="match status" value="1"/>
</dbReference>
<dbReference type="PANTHER" id="PTHR21371:SF1">
    <property type="entry name" value="KETOL-ACID REDUCTOISOMERASE, MITOCHONDRIAL"/>
    <property type="match status" value="1"/>
</dbReference>
<dbReference type="Pfam" id="PF01450">
    <property type="entry name" value="KARI_C"/>
    <property type="match status" value="1"/>
</dbReference>
<dbReference type="Pfam" id="PF07991">
    <property type="entry name" value="KARI_N"/>
    <property type="match status" value="1"/>
</dbReference>
<dbReference type="PIRSF" id="PIRSF000116">
    <property type="entry name" value="IlvC_gammaproteo"/>
    <property type="match status" value="1"/>
</dbReference>
<dbReference type="SUPFAM" id="SSF48179">
    <property type="entry name" value="6-phosphogluconate dehydrogenase C-terminal domain-like"/>
    <property type="match status" value="1"/>
</dbReference>
<dbReference type="SUPFAM" id="SSF51735">
    <property type="entry name" value="NAD(P)-binding Rossmann-fold domains"/>
    <property type="match status" value="1"/>
</dbReference>
<dbReference type="PROSITE" id="PS51851">
    <property type="entry name" value="KARI_C"/>
    <property type="match status" value="1"/>
</dbReference>
<dbReference type="PROSITE" id="PS51850">
    <property type="entry name" value="KARI_N"/>
    <property type="match status" value="1"/>
</dbReference>